<evidence type="ECO:0000250" key="1"/>
<evidence type="ECO:0000250" key="2">
    <source>
        <dbReference type="UniProtKB" id="Q9TWF8"/>
    </source>
</evidence>
<evidence type="ECO:0000255" key="3">
    <source>
        <dbReference type="PROSITE-ProRule" id="PRU00031"/>
    </source>
</evidence>
<evidence type="ECO:0000269" key="4">
    <source ref="1"/>
</evidence>
<evidence type="ECO:0000303" key="5">
    <source>
    </source>
</evidence>
<evidence type="ECO:0000303" key="6">
    <source ref="2"/>
</evidence>
<evidence type="ECO:0000305" key="7"/>
<reference key="1">
    <citation type="journal article" date="1987" name="Naturwissenschaften">
        <title>Isolation and structural determination of a hemolytic active peptide from the sea anemone Metridium senile.</title>
        <authorList>
            <person name="Krebs H.C."/>
            <person name="Habermehl G.G."/>
        </authorList>
    </citation>
    <scope>PROTEIN SEQUENCE</scope>
    <scope>FUNCTION</scope>
</reference>
<reference key="2">
    <citation type="journal article" date="1981" name="Methods Enzymol.">
        <title>The broad-specificity proteinase inhibitor 5 II from the sea anemone Anemonia sulcata.</title>
        <authorList>
            <person name="Wunderer G."/>
            <person name="Machleidt W."/>
            <person name="Fritz H."/>
        </authorList>
    </citation>
    <scope>PROTEIN SEQUENCE OF 1-59</scope>
</reference>
<reference key="3">
    <citation type="journal article" date="2012" name="Toxicon">
        <title>Development of a rational nomenclature for naming peptide and protein toxins from sea anemones.</title>
        <authorList>
            <person name="Oliveira J.S."/>
            <person name="Fuentes-Silva D."/>
            <person name="King G.F."/>
        </authorList>
    </citation>
    <scope>NOMENCLATURE</scope>
</reference>
<accession>P10280</accession>
<name>VKT52_ANESU</name>
<proteinExistence type="evidence at protein level"/>
<sequence length="62" mass="6937">INGDCELPKVVGPCRARFPRYYYNSSSKRCEKFIYGGCGGNANNFHTLEECEKVCGVRSVGR</sequence>
<feature type="chain" id="PRO_0000155415" description="KappaPI-actitoxin-Avd3a" evidence="4">
    <location>
        <begin position="1"/>
        <end position="62"/>
    </location>
</feature>
<feature type="domain" description="BPTI/Kunitz inhibitor" evidence="3">
    <location>
        <begin position="5"/>
        <end position="55"/>
    </location>
</feature>
<feature type="site" description="Reactive bond" evidence="1">
    <location>
        <begin position="15"/>
        <end position="16"/>
    </location>
</feature>
<feature type="disulfide bond" evidence="3">
    <location>
        <begin position="5"/>
        <end position="55"/>
    </location>
</feature>
<feature type="disulfide bond" evidence="3">
    <location>
        <begin position="14"/>
        <end position="38"/>
    </location>
</feature>
<feature type="disulfide bond" evidence="3">
    <location>
        <begin position="30"/>
        <end position="51"/>
    </location>
</feature>
<feature type="sequence variant">
    <original>P</original>
    <variation>R</variation>
    <location>
        <position position="13"/>
    </location>
</feature>
<feature type="sequence variant">
    <original>A</original>
    <variation>G</variation>
    <location>
        <position position="16"/>
    </location>
</feature>
<feature type="sequence variant">
    <original>R</original>
    <variation>G</variation>
    <location>
        <position position="17"/>
    </location>
</feature>
<feature type="sequence variant">
    <original>S</original>
    <variation>L</variation>
    <location>
        <position position="25"/>
    </location>
</feature>
<feature type="sequence variant">
    <original>K</original>
    <variation>R</variation>
    <location>
        <position position="28"/>
    </location>
</feature>
<feature type="sequence variant">
    <original>G</original>
    <variation>R</variation>
    <location>
        <position position="39"/>
    </location>
</feature>
<protein>
    <recommendedName>
        <fullName evidence="5">KappaPI-actitoxin-Avd3a</fullName>
        <shortName evidence="5">KappaPI-AITX-Avd3a</shortName>
    </recommendedName>
    <alternativeName>
        <fullName evidence="6">Kunitz-type proteinase inhibitor 5 II</fullName>
    </alternativeName>
    <alternativeName>
        <fullName evidence="6">SA5 II</fullName>
    </alternativeName>
</protein>
<dbReference type="PIR" id="S07451">
    <property type="entry name" value="S07451"/>
</dbReference>
<dbReference type="SMR" id="P10280"/>
<dbReference type="MEROPS" id="I02.026"/>
<dbReference type="GO" id="GO:0005615">
    <property type="term" value="C:extracellular space"/>
    <property type="evidence" value="ECO:0007669"/>
    <property type="project" value="TreeGrafter"/>
</dbReference>
<dbReference type="GO" id="GO:0042151">
    <property type="term" value="C:nematocyst"/>
    <property type="evidence" value="ECO:0007669"/>
    <property type="project" value="UniProtKB-SubCell"/>
</dbReference>
<dbReference type="GO" id="GO:0004867">
    <property type="term" value="F:serine-type endopeptidase inhibitor activity"/>
    <property type="evidence" value="ECO:0007669"/>
    <property type="project" value="UniProtKB-KW"/>
</dbReference>
<dbReference type="CDD" id="cd22633">
    <property type="entry name" value="Kunitz_actitoxin-like"/>
    <property type="match status" value="1"/>
</dbReference>
<dbReference type="FunFam" id="4.10.410.10:FF:000021">
    <property type="entry name" value="Serine protease inhibitor, putative"/>
    <property type="match status" value="1"/>
</dbReference>
<dbReference type="Gene3D" id="4.10.410.10">
    <property type="entry name" value="Pancreatic trypsin inhibitor Kunitz domain"/>
    <property type="match status" value="1"/>
</dbReference>
<dbReference type="InterPro" id="IPR002223">
    <property type="entry name" value="Kunitz_BPTI"/>
</dbReference>
<dbReference type="InterPro" id="IPR036880">
    <property type="entry name" value="Kunitz_BPTI_sf"/>
</dbReference>
<dbReference type="InterPro" id="IPR020901">
    <property type="entry name" value="Prtase_inh_Kunz-CS"/>
</dbReference>
<dbReference type="InterPro" id="IPR050098">
    <property type="entry name" value="TFPI/VKTCI-like"/>
</dbReference>
<dbReference type="PANTHER" id="PTHR10083:SF374">
    <property type="entry name" value="BPTI_KUNITZ INHIBITOR DOMAIN-CONTAINING PROTEIN"/>
    <property type="match status" value="1"/>
</dbReference>
<dbReference type="PANTHER" id="PTHR10083">
    <property type="entry name" value="KUNITZ-TYPE PROTEASE INHIBITOR-RELATED"/>
    <property type="match status" value="1"/>
</dbReference>
<dbReference type="Pfam" id="PF00014">
    <property type="entry name" value="Kunitz_BPTI"/>
    <property type="match status" value="1"/>
</dbReference>
<dbReference type="PRINTS" id="PR00759">
    <property type="entry name" value="BASICPTASE"/>
</dbReference>
<dbReference type="SMART" id="SM00131">
    <property type="entry name" value="KU"/>
    <property type="match status" value="1"/>
</dbReference>
<dbReference type="SUPFAM" id="SSF57362">
    <property type="entry name" value="BPTI-like"/>
    <property type="match status" value="1"/>
</dbReference>
<dbReference type="PROSITE" id="PS00280">
    <property type="entry name" value="BPTI_KUNITZ_1"/>
    <property type="match status" value="1"/>
</dbReference>
<dbReference type="PROSITE" id="PS50279">
    <property type="entry name" value="BPTI_KUNITZ_2"/>
    <property type="match status" value="1"/>
</dbReference>
<comment type="function">
    <text evidence="2 4">Serine protease inhibitor that inhibits both tissue and plasma kallikreins. Has hemolytic activity (Ref.2). Inhibits voltage-gated potassium channels (By similarity).</text>
</comment>
<comment type="subcellular location">
    <subcellularLocation>
        <location evidence="7">Secreted</location>
    </subcellularLocation>
    <subcellularLocation>
        <location evidence="7">Nematocyst</location>
    </subcellularLocation>
</comment>
<comment type="similarity">
    <text evidence="7">Belongs to the venom Kunitz-type family. Sea anemone type 2 potassium channel toxin subfamily.</text>
</comment>
<comment type="caution">
    <text evidence="7">Opinions are divided on whether Anemonia viridis (Forsskal, 1775) and Anemonia sulcata (Pennant, 1777) are separate species.</text>
</comment>
<organism>
    <name type="scientific">Anemonia sulcata</name>
    <name type="common">Mediterranean snakelocks sea anemone</name>
    <dbReference type="NCBI Taxonomy" id="6108"/>
    <lineage>
        <taxon>Eukaryota</taxon>
        <taxon>Metazoa</taxon>
        <taxon>Cnidaria</taxon>
        <taxon>Anthozoa</taxon>
        <taxon>Hexacorallia</taxon>
        <taxon>Actiniaria</taxon>
        <taxon>Actiniidae</taxon>
        <taxon>Anemonia</taxon>
    </lineage>
</organism>
<keyword id="KW-0903">Direct protein sequencing</keyword>
<keyword id="KW-1015">Disulfide bond</keyword>
<keyword id="KW-0166">Nematocyst</keyword>
<keyword id="KW-0646">Protease inhibitor</keyword>
<keyword id="KW-0964">Secreted</keyword>
<keyword id="KW-0722">Serine protease inhibitor</keyword>